<proteinExistence type="evidence at protein level"/>
<accession>B7UJE1</accession>
<evidence type="ECO:0000250" key="1"/>
<evidence type="ECO:0000255" key="2"/>
<evidence type="ECO:0000269" key="3">
    <source>
    </source>
</evidence>
<evidence type="ECO:0000269" key="4">
    <source>
    </source>
</evidence>
<evidence type="ECO:0000305" key="5"/>
<keyword id="KW-0281">Fimbrium</keyword>
<keyword id="KW-1185">Reference proteome</keyword>
<keyword id="KW-0732">Signal</keyword>
<reference key="1">
    <citation type="journal article" date="2009" name="J. Bacteriol.">
        <title>Complete genome sequence and comparative genome analysis of enteropathogenic Escherichia coli O127:H6 strain E2348/69.</title>
        <authorList>
            <person name="Iguchi A."/>
            <person name="Thomson N.R."/>
            <person name="Ogura Y."/>
            <person name="Saunders D."/>
            <person name="Ooka T."/>
            <person name="Henderson I.R."/>
            <person name="Harris D."/>
            <person name="Asadulghani M."/>
            <person name="Kurokawa K."/>
            <person name="Dean P."/>
            <person name="Kenny B."/>
            <person name="Quail M.A."/>
            <person name="Thurston S."/>
            <person name="Dougan G."/>
            <person name="Hayashi T."/>
            <person name="Parkhill J."/>
            <person name="Frankel G."/>
        </authorList>
    </citation>
    <scope>NUCLEOTIDE SEQUENCE [LARGE SCALE GENOMIC DNA]</scope>
    <source>
        <strain>E2348/69 / EPEC</strain>
    </source>
</reference>
<reference key="2">
    <citation type="journal article" date="2012" name="J. Bacteriol.">
        <title>Transcriptional regulation of the ecp operon by EcpR, IHF, and H-NS in attaching and effacing Escherichia coli.</title>
        <authorList>
            <person name="Martinez-Santos V.I."/>
            <person name="Medrano-Lopez A."/>
            <person name="Saldana Z."/>
            <person name="Giron J.A."/>
            <person name="Puente J.L."/>
        </authorList>
    </citation>
    <scope>INDUCTION</scope>
    <source>
        <strain>E2348/69 / EPEC</strain>
    </source>
</reference>
<reference key="3">
    <citation type="journal article" date="2012" name="Proc. Natl. Acad. Sci. U.S.A.">
        <title>Structural insights into the biogenesis and biofilm formation by the Escherichia coli common pilus.</title>
        <authorList>
            <person name="Garnett J.A."/>
            <person name="Martinez-Santos V.I."/>
            <person name="Saldana Z."/>
            <person name="Pape T."/>
            <person name="Hawthorne W."/>
            <person name="Chan J."/>
            <person name="Simpson P.J."/>
            <person name="Cota E."/>
            <person name="Puente J.L."/>
            <person name="Giron J.A."/>
            <person name="Matthews S."/>
        </authorList>
    </citation>
    <scope>SUBUNIT</scope>
    <scope>INTERACTION WITH ECPD</scope>
    <source>
        <strain>E2348/69 / EPEC</strain>
    </source>
</reference>
<gene>
    <name type="primary">ecpA</name>
    <name type="ordered locus">E2348C_0249</name>
</gene>
<name>ECPA_ECO27</name>
<dbReference type="EMBL" id="FM180568">
    <property type="protein sequence ID" value="CAS07797.1"/>
    <property type="molecule type" value="Genomic_DNA"/>
</dbReference>
<dbReference type="RefSeq" id="WP_000730982.1">
    <property type="nucleotide sequence ID" value="NC_011601.1"/>
</dbReference>
<dbReference type="SMR" id="B7UJE1"/>
<dbReference type="KEGG" id="ecg:E2348C_0249"/>
<dbReference type="HOGENOM" id="CLU_120328_0_0_6"/>
<dbReference type="Proteomes" id="UP000008205">
    <property type="component" value="Chromosome"/>
</dbReference>
<dbReference type="GO" id="GO:0009289">
    <property type="term" value="C:pilus"/>
    <property type="evidence" value="ECO:0007669"/>
    <property type="project" value="UniProtKB-SubCell"/>
</dbReference>
<dbReference type="Gene3D" id="2.60.40.3290">
    <property type="entry name" value="Fimbrial protein EcpA"/>
    <property type="match status" value="1"/>
</dbReference>
<dbReference type="InterPro" id="IPR016514">
    <property type="entry name" value="EcpA"/>
</dbReference>
<dbReference type="InterPro" id="IPR038478">
    <property type="entry name" value="Fimbrillin_EcpA_sf"/>
</dbReference>
<dbReference type="Pfam" id="PF16449">
    <property type="entry name" value="MatB"/>
    <property type="match status" value="1"/>
</dbReference>
<dbReference type="PIRSF" id="PIRSF007320">
    <property type="entry name" value="Fimbrillin_MatB"/>
    <property type="match status" value="1"/>
</dbReference>
<protein>
    <recommendedName>
        <fullName>Common pilus major fimbrillin subunit EcpA</fullName>
    </recommendedName>
    <alternativeName>
        <fullName>MatB fimbrillin</fullName>
    </alternativeName>
</protein>
<sequence length="195" mass="20081">MKKKVLAIALVTVFTGTGVAQAADVTAQAVATWSATAKKDTTSKLVVTPLGSLAFQYAEGIKGFNSQKGLFDVAIEGDSTATAFKLTSRLITNTLTQLDTSGSTLNVGVDYNGAAVEKTGDTVMIDTANGVLGGNLSPLANGYNASNRTTAQDGFTFSIISGTTNGTTAVTDYSTLPEGIWSGDVSVQFDATWTS</sequence>
<comment type="function">
    <text evidence="1">Part of the ecpRABCDE operon, which encodes the E.coli common pilus (ECP). ECP is found in both commensal and pathogenic strains and plays a dual role in early-stage biofilm development and host cell recognition. Major subunit of the fimbria (By similarity).</text>
</comment>
<comment type="subunit">
    <text evidence="3">Self-associates. Forms filaments. Interacts with EcpD.</text>
</comment>
<comment type="subcellular location">
    <subcellularLocation>
        <location evidence="1">Fimbrium</location>
    </subcellularLocation>
</comment>
<comment type="induction">
    <text evidence="4">Negatively regulated by H-NS. Positively regulated by IHF and EcpR.</text>
</comment>
<comment type="similarity">
    <text evidence="5">Belongs to the EcpA/MatB fimbrillin family.</text>
</comment>
<feature type="signal peptide" evidence="2">
    <location>
        <begin position="1"/>
        <end position="22"/>
    </location>
</feature>
<feature type="chain" id="PRO_0000429477" description="Common pilus major fimbrillin subunit EcpA">
    <location>
        <begin position="23"/>
        <end position="195"/>
    </location>
</feature>
<organism>
    <name type="scientific">Escherichia coli O127:H6 (strain E2348/69 / EPEC)</name>
    <dbReference type="NCBI Taxonomy" id="574521"/>
    <lineage>
        <taxon>Bacteria</taxon>
        <taxon>Pseudomonadati</taxon>
        <taxon>Pseudomonadota</taxon>
        <taxon>Gammaproteobacteria</taxon>
        <taxon>Enterobacterales</taxon>
        <taxon>Enterobacteriaceae</taxon>
        <taxon>Escherichia</taxon>
    </lineage>
</organism>